<organism>
    <name type="scientific">Dictyostelium discoideum</name>
    <name type="common">Social amoeba</name>
    <dbReference type="NCBI Taxonomy" id="44689"/>
    <lineage>
        <taxon>Eukaryota</taxon>
        <taxon>Amoebozoa</taxon>
        <taxon>Evosea</taxon>
        <taxon>Eumycetozoa</taxon>
        <taxon>Dictyostelia</taxon>
        <taxon>Dictyosteliales</taxon>
        <taxon>Dictyosteliaceae</taxon>
        <taxon>Dictyostelium</taxon>
    </lineage>
</organism>
<feature type="chain" id="PRO_0000392078" description="Darlin">
    <location>
        <begin position="1"/>
        <end position="766"/>
    </location>
</feature>
<feature type="repeat" description="ARM 1">
    <location>
        <begin position="82"/>
        <end position="119"/>
    </location>
</feature>
<feature type="repeat" description="ARM 2">
    <location>
        <begin position="167"/>
        <end position="208"/>
    </location>
</feature>
<feature type="repeat" description="ARM 3">
    <location>
        <begin position="423"/>
        <end position="464"/>
    </location>
</feature>
<feature type="repeat" description="ARM 4">
    <location>
        <begin position="465"/>
        <end position="537"/>
    </location>
</feature>
<feature type="repeat" description="ARM 5">
    <location>
        <begin position="610"/>
        <end position="649"/>
    </location>
</feature>
<feature type="region of interest" description="Disordered" evidence="1">
    <location>
        <begin position="561"/>
        <end position="585"/>
    </location>
</feature>
<evidence type="ECO:0000256" key="1">
    <source>
        <dbReference type="SAM" id="MobiDB-lite"/>
    </source>
</evidence>
<evidence type="ECO:0000269" key="2">
    <source>
    </source>
</evidence>
<evidence type="ECO:0000305" key="3"/>
<gene>
    <name type="primary">darA</name>
    <name type="ORF">DDB_G0288771</name>
</gene>
<keyword id="KW-0903">Direct protein sequencing</keyword>
<keyword id="KW-1185">Reference proteome</keyword>
<keyword id="KW-0677">Repeat</keyword>
<reference key="1">
    <citation type="journal article" date="1998" name="Mol. Biol. Cell">
        <title>Identification of darlin, a Dictyostelium protein with Armadillo-like repeats that binds to small GTPases and is important for the proper aggregation of developing cells.</title>
        <authorList>
            <person name="Vithalani K.K."/>
            <person name="Parent C.A."/>
            <person name="Thorn E.M."/>
            <person name="Penn M."/>
            <person name="Larochelle D.A."/>
            <person name="Devreotes P.N."/>
            <person name="De Lozanne A."/>
        </authorList>
    </citation>
    <scope>NUCLEOTIDE SEQUENCE [GENOMIC DNA]</scope>
    <scope>PROTEIN SEQUENCE OF 20-33; 62-79 AND 235-256</scope>
    <scope>FUNCTION</scope>
    <scope>INTERACTION WITH RACE AND RACC</scope>
    <scope>DISRUPTION PHENOTYPE</scope>
</reference>
<reference key="2">
    <citation type="journal article" date="2005" name="Nature">
        <title>The genome of the social amoeba Dictyostelium discoideum.</title>
        <authorList>
            <person name="Eichinger L."/>
            <person name="Pachebat J.A."/>
            <person name="Gloeckner G."/>
            <person name="Rajandream M.A."/>
            <person name="Sucgang R."/>
            <person name="Berriman M."/>
            <person name="Song J."/>
            <person name="Olsen R."/>
            <person name="Szafranski K."/>
            <person name="Xu Q."/>
            <person name="Tunggal B."/>
            <person name="Kummerfeld S."/>
            <person name="Madera M."/>
            <person name="Konfortov B.A."/>
            <person name="Rivero F."/>
            <person name="Bankier A.T."/>
            <person name="Lehmann R."/>
            <person name="Hamlin N."/>
            <person name="Davies R."/>
            <person name="Gaudet P."/>
            <person name="Fey P."/>
            <person name="Pilcher K."/>
            <person name="Chen G."/>
            <person name="Saunders D."/>
            <person name="Sodergren E.J."/>
            <person name="Davis P."/>
            <person name="Kerhornou A."/>
            <person name="Nie X."/>
            <person name="Hall N."/>
            <person name="Anjard C."/>
            <person name="Hemphill L."/>
            <person name="Bason N."/>
            <person name="Farbrother P."/>
            <person name="Desany B."/>
            <person name="Just E."/>
            <person name="Morio T."/>
            <person name="Rost R."/>
            <person name="Churcher C.M."/>
            <person name="Cooper J."/>
            <person name="Haydock S."/>
            <person name="van Driessche N."/>
            <person name="Cronin A."/>
            <person name="Goodhead I."/>
            <person name="Muzny D.M."/>
            <person name="Mourier T."/>
            <person name="Pain A."/>
            <person name="Lu M."/>
            <person name="Harper D."/>
            <person name="Lindsay R."/>
            <person name="Hauser H."/>
            <person name="James K.D."/>
            <person name="Quiles M."/>
            <person name="Madan Babu M."/>
            <person name="Saito T."/>
            <person name="Buchrieser C."/>
            <person name="Wardroper A."/>
            <person name="Felder M."/>
            <person name="Thangavelu M."/>
            <person name="Johnson D."/>
            <person name="Knights A."/>
            <person name="Loulseged H."/>
            <person name="Mungall K.L."/>
            <person name="Oliver K."/>
            <person name="Price C."/>
            <person name="Quail M.A."/>
            <person name="Urushihara H."/>
            <person name="Hernandez J."/>
            <person name="Rabbinowitsch E."/>
            <person name="Steffen D."/>
            <person name="Sanders M."/>
            <person name="Ma J."/>
            <person name="Kohara Y."/>
            <person name="Sharp S."/>
            <person name="Simmonds M.N."/>
            <person name="Spiegler S."/>
            <person name="Tivey A."/>
            <person name="Sugano S."/>
            <person name="White B."/>
            <person name="Walker D."/>
            <person name="Woodward J.R."/>
            <person name="Winckler T."/>
            <person name="Tanaka Y."/>
            <person name="Shaulsky G."/>
            <person name="Schleicher M."/>
            <person name="Weinstock G.M."/>
            <person name="Rosenthal A."/>
            <person name="Cox E.C."/>
            <person name="Chisholm R.L."/>
            <person name="Gibbs R.A."/>
            <person name="Loomis W.F."/>
            <person name="Platzer M."/>
            <person name="Kay R.R."/>
            <person name="Williams J.G."/>
            <person name="Dear P.H."/>
            <person name="Noegel A.A."/>
            <person name="Barrell B.G."/>
            <person name="Kuspa A."/>
        </authorList>
    </citation>
    <scope>NUCLEOTIDE SEQUENCE [LARGE SCALE GENOMIC DNA]</scope>
    <source>
        <strain>AX4</strain>
    </source>
</reference>
<dbReference type="EMBL" id="AF006055">
    <property type="protein sequence ID" value="AAC34253.1"/>
    <property type="molecule type" value="Genomic_DNA"/>
</dbReference>
<dbReference type="EMBL" id="AAFI02000125">
    <property type="protein sequence ID" value="EAL63007.1"/>
    <property type="molecule type" value="Genomic_DNA"/>
</dbReference>
<dbReference type="PIR" id="T03218">
    <property type="entry name" value="T03218"/>
</dbReference>
<dbReference type="RefSeq" id="XP_636531.1">
    <property type="nucleotide sequence ID" value="XM_631439.1"/>
</dbReference>
<dbReference type="FunCoup" id="O76187">
    <property type="interactions" value="118"/>
</dbReference>
<dbReference type="IntAct" id="O76187">
    <property type="interactions" value="4"/>
</dbReference>
<dbReference type="STRING" id="44689.O76187"/>
<dbReference type="PaxDb" id="44689-DDB0191300"/>
<dbReference type="EnsemblProtists" id="EAL63007">
    <property type="protein sequence ID" value="EAL63007"/>
    <property type="gene ID" value="DDB_G0288771"/>
</dbReference>
<dbReference type="GeneID" id="8626817"/>
<dbReference type="KEGG" id="ddi:DDB_G0288771"/>
<dbReference type="dictyBase" id="DDB_G0288771">
    <property type="gene designation" value="darA"/>
</dbReference>
<dbReference type="VEuPathDB" id="AmoebaDB:DDB_G0288771"/>
<dbReference type="eggNOG" id="ENOG502REAH">
    <property type="taxonomic scope" value="Eukaryota"/>
</dbReference>
<dbReference type="HOGENOM" id="CLU_364653_0_0_1"/>
<dbReference type="InParanoid" id="O76187"/>
<dbReference type="OMA" id="FIQLEFF"/>
<dbReference type="PhylomeDB" id="O76187"/>
<dbReference type="PRO" id="PR:O76187"/>
<dbReference type="Proteomes" id="UP000002195">
    <property type="component" value="Chromosome 5"/>
</dbReference>
<dbReference type="GO" id="GO:0005829">
    <property type="term" value="C:cytosol"/>
    <property type="evidence" value="ECO:0000318"/>
    <property type="project" value="GO_Central"/>
</dbReference>
<dbReference type="GO" id="GO:0005085">
    <property type="term" value="F:guanyl-nucleotide exchange factor activity"/>
    <property type="evidence" value="ECO:0007669"/>
    <property type="project" value="InterPro"/>
</dbReference>
<dbReference type="GO" id="GO:0031267">
    <property type="term" value="F:small GTPase binding"/>
    <property type="evidence" value="ECO:0000353"/>
    <property type="project" value="UniProtKB"/>
</dbReference>
<dbReference type="GO" id="GO:0031152">
    <property type="term" value="P:aggregation involved in sorocarp development"/>
    <property type="evidence" value="ECO:0000315"/>
    <property type="project" value="dictyBase"/>
</dbReference>
<dbReference type="FunFam" id="1.25.10.10:FF:002110">
    <property type="entry name" value="Darlin"/>
    <property type="match status" value="1"/>
</dbReference>
<dbReference type="Gene3D" id="1.25.10.10">
    <property type="entry name" value="Leucine-rich Repeat Variant"/>
    <property type="match status" value="2"/>
</dbReference>
<dbReference type="InterPro" id="IPR011989">
    <property type="entry name" value="ARM-like"/>
</dbReference>
<dbReference type="InterPro" id="IPR016024">
    <property type="entry name" value="ARM-type_fold"/>
</dbReference>
<dbReference type="InterPro" id="IPR040144">
    <property type="entry name" value="RAP1GDS1"/>
</dbReference>
<dbReference type="PANTHER" id="PTHR10957">
    <property type="entry name" value="RAP1 GTPASE-GDP DISSOCIATION STIMULATOR 1"/>
    <property type="match status" value="1"/>
</dbReference>
<dbReference type="SUPFAM" id="SSF48371">
    <property type="entry name" value="ARM repeat"/>
    <property type="match status" value="1"/>
</dbReference>
<protein>
    <recommendedName>
        <fullName>Darlin</fullName>
    </recommendedName>
    <alternativeName>
        <fullName>Armadillo-like protein A</fullName>
    </alternativeName>
</protein>
<comment type="function">
    <text evidence="2">Part of a signaling pathway that initiates the aggregation and leads to the formation of aggregation centers or streams. Not essential for cytokinesis, pinocytosis or phagocytosis. Not essential for development, except in starvation-induced aggregation.</text>
</comment>
<comment type="subunit">
    <text>Binds to small GTPases racE, racC but not rab21. Binds preferentially to GDP-bound racE.</text>
</comment>
<comment type="interaction">
    <interactant intactId="EBI-2889579">
        <id>O76187</id>
    </interactant>
    <interactant intactId="EBI-2118748">
        <id>Q23862</id>
        <label>racE</label>
    </interactant>
    <organismsDiffer>false</organismsDiffer>
    <experiments>2</experiments>
</comment>
<comment type="disruption phenotype">
    <text evidence="2">Not able to initiate development when placed in starvation buffer. Defect in ability of cells to aggregate in response to starvation. They were unable to form aggregation centers and streams, possibly because of a defect in cAMP relay signaling.</text>
</comment>
<comment type="similarity">
    <text evidence="3">Belongs to the RAP1GDS1 family.</text>
</comment>
<name>DARA_DICDI</name>
<sequence>MEEIQKLINELGGSQYKDKDTEHYSEEAVELLIKKIDNKSKGKTVIESNTLIYKTLADWSKVEDNRETIIRSPSNVIEKTFQLFEFLLPNGVETLNTDTTVEQSELFSMVCRLLGNLTYENAPNREFIFDKTPSILKYISSFVSQTKYQSLQRTSCAAIANLSSETDFIQLEFFKLGVVSILIDLICREGTTDEVNQMAIKAFNNLVDNENTQVDIHFKEIHRLLGQLKKSLNKEGYYENSFANDLVSSLSTLSLNKDLQKEILKEGFLNDLIELIEESNVHREMINQFEDDDIEKDKDISIAPSTSELIFKLADNDDYRQYFYNKERDGNDANNILDRMIKIMTSPPPAYKDGDSKAQLKALDVAKVKKNITKTIALCSLEDDVIDKFIKTPKIFVDLLVDTEDTERIVNGEMIIGNLARSEPNCRLLNSYNVIELIADIMKKFPNFQPIQHLGLSSIRNLTLPTINKGFKPSSTLMEDVVFNSKVHNQVIQFAALSLIKNFIGCDQSNLKLFLEFPNALQSLLDLANGRVPASMDDESDQQEQLQLDDAKIQEIEEKFEEKEKTIEKTDEKTDEKTNEKKQSKKDMRVIYEATRLLLRFLDNSELSNHQEKMKQLIEESVEPFFSLLQSPFPILQVEGAKGLVLLIKHDKQLFLSRPSWVKDLVEVLSLSIIPFQQLSREQSTITTDPNHQKLIAQIQSNCNFSTELQNVILSNIFYNFSLDESICKKMKDQNVISELKTLKSKQDAPQSLTNLIQKILVQLTI</sequence>
<proteinExistence type="evidence at protein level"/>
<accession>O76187</accession>
<accession>Q54IE6</accession>